<accession>O78411</accession>
<comment type="function">
    <text evidence="1">A replicative DNA helicase, it participates in initiation and elongation during chromosome replication. Travels ahead of the DNA replisome, separating dsDNA into templates for DNA synthesis. A processive ATP-dependent 5'-3' DNA helicase it has DNA-dependent ATPase activity.</text>
</comment>
<comment type="function">
    <text evidence="2">The intein is an endonuclease.</text>
</comment>
<comment type="catalytic activity">
    <reaction evidence="1">
        <text>Couples ATP hydrolysis with the unwinding of duplex DNA at the replication fork by translocating in the 5'-3' direction. This creates two antiparallel DNA single strands (ssDNA). The leading ssDNA polymer is the template for DNA polymerase III holoenzyme which synthesizes a continuous strand.</text>
        <dbReference type="EC" id="5.6.2.3"/>
    </reaction>
</comment>
<comment type="catalytic activity">
    <reaction evidence="1">
        <text>ATP + H2O = ADP + phosphate + H(+)</text>
        <dbReference type="Rhea" id="RHEA:13065"/>
        <dbReference type="ChEBI" id="CHEBI:15377"/>
        <dbReference type="ChEBI" id="CHEBI:15378"/>
        <dbReference type="ChEBI" id="CHEBI:30616"/>
        <dbReference type="ChEBI" id="CHEBI:43474"/>
        <dbReference type="ChEBI" id="CHEBI:456216"/>
        <dbReference type="EC" id="5.6.2.3"/>
    </reaction>
</comment>
<comment type="subunit">
    <text evidence="1">Homohexamer.</text>
</comment>
<comment type="subcellular location">
    <subcellularLocation>
        <location>Plastid</location>
        <location>Chloroplast</location>
    </subcellularLocation>
</comment>
<comment type="PTM">
    <text evidence="2">This protein undergoes a protein self splicing that involves a post-translational excision of the intervening region (intein) followed by peptide ligation.</text>
</comment>
<comment type="similarity">
    <text evidence="5">Belongs to the helicase family. DnaB subfamily.</text>
</comment>
<name>DNAB_GUITH</name>
<gene>
    <name type="primary">dnaB</name>
</gene>
<dbReference type="EC" id="5.6.2.3" evidence="1"/>
<dbReference type="EC" id="3.1.-.-" evidence="2"/>
<dbReference type="EMBL" id="AF041468">
    <property type="protein sequence ID" value="AAC35596.1"/>
    <property type="molecule type" value="Genomic_DNA"/>
</dbReference>
<dbReference type="RefSeq" id="NP_050662.1">
    <property type="nucleotide sequence ID" value="NC_000926.1"/>
</dbReference>
<dbReference type="SMR" id="O78411"/>
<dbReference type="GeneID" id="856947"/>
<dbReference type="HOGENOM" id="CLU_005373_0_0_1"/>
<dbReference type="OMA" id="IEFHARI"/>
<dbReference type="GO" id="GO:0009507">
    <property type="term" value="C:chloroplast"/>
    <property type="evidence" value="ECO:0007669"/>
    <property type="project" value="UniProtKB-SubCell"/>
</dbReference>
<dbReference type="GO" id="GO:0005829">
    <property type="term" value="C:cytosol"/>
    <property type="evidence" value="ECO:0007669"/>
    <property type="project" value="TreeGrafter"/>
</dbReference>
<dbReference type="GO" id="GO:0005524">
    <property type="term" value="F:ATP binding"/>
    <property type="evidence" value="ECO:0007669"/>
    <property type="project" value="UniProtKB-KW"/>
</dbReference>
<dbReference type="GO" id="GO:0016887">
    <property type="term" value="F:ATP hydrolysis activity"/>
    <property type="evidence" value="ECO:0007669"/>
    <property type="project" value="RHEA"/>
</dbReference>
<dbReference type="GO" id="GO:0003677">
    <property type="term" value="F:DNA binding"/>
    <property type="evidence" value="ECO:0007669"/>
    <property type="project" value="UniProtKB-KW"/>
</dbReference>
<dbReference type="GO" id="GO:0003678">
    <property type="term" value="F:DNA helicase activity"/>
    <property type="evidence" value="ECO:0007669"/>
    <property type="project" value="InterPro"/>
</dbReference>
<dbReference type="GO" id="GO:0006269">
    <property type="term" value="P:DNA replication, synthesis of primer"/>
    <property type="evidence" value="ECO:0007669"/>
    <property type="project" value="UniProtKB-KW"/>
</dbReference>
<dbReference type="CDD" id="cd00984">
    <property type="entry name" value="DnaB_C"/>
    <property type="match status" value="1"/>
</dbReference>
<dbReference type="Gene3D" id="1.10.860.10">
    <property type="entry name" value="DNAb Helicase, Chain A"/>
    <property type="match status" value="1"/>
</dbReference>
<dbReference type="Gene3D" id="2.170.16.10">
    <property type="entry name" value="Hedgehog/Intein (Hint) domain"/>
    <property type="match status" value="1"/>
</dbReference>
<dbReference type="Gene3D" id="3.40.50.300">
    <property type="entry name" value="P-loop containing nucleotide triphosphate hydrolases"/>
    <property type="match status" value="2"/>
</dbReference>
<dbReference type="InterPro" id="IPR036185">
    <property type="entry name" value="DNA_heli_DnaB-like_N_sf"/>
</dbReference>
<dbReference type="InterPro" id="IPR007692">
    <property type="entry name" value="DNA_helicase_DnaB"/>
</dbReference>
<dbReference type="InterPro" id="IPR007694">
    <property type="entry name" value="DNA_helicase_DnaB-like_C"/>
</dbReference>
<dbReference type="InterPro" id="IPR007693">
    <property type="entry name" value="DNA_helicase_DnaB-like_N"/>
</dbReference>
<dbReference type="InterPro" id="IPR016136">
    <property type="entry name" value="DNA_helicase_N/primase_C"/>
</dbReference>
<dbReference type="InterPro" id="IPR003586">
    <property type="entry name" value="Hint_dom_C"/>
</dbReference>
<dbReference type="InterPro" id="IPR036844">
    <property type="entry name" value="Hint_dom_sf"/>
</dbReference>
<dbReference type="InterPro" id="IPR030934">
    <property type="entry name" value="Intein_C"/>
</dbReference>
<dbReference type="InterPro" id="IPR027417">
    <property type="entry name" value="P-loop_NTPase"/>
</dbReference>
<dbReference type="NCBIfam" id="TIGR00665">
    <property type="entry name" value="DnaB"/>
    <property type="match status" value="1"/>
</dbReference>
<dbReference type="PANTHER" id="PTHR30153:SF2">
    <property type="entry name" value="REPLICATIVE DNA HELICASE"/>
    <property type="match status" value="1"/>
</dbReference>
<dbReference type="PANTHER" id="PTHR30153">
    <property type="entry name" value="REPLICATIVE DNA HELICASE DNAB"/>
    <property type="match status" value="1"/>
</dbReference>
<dbReference type="Pfam" id="PF00772">
    <property type="entry name" value="DnaB"/>
    <property type="match status" value="1"/>
</dbReference>
<dbReference type="Pfam" id="PF03796">
    <property type="entry name" value="DnaB_C"/>
    <property type="match status" value="1"/>
</dbReference>
<dbReference type="SMART" id="SM00305">
    <property type="entry name" value="HintC"/>
    <property type="match status" value="1"/>
</dbReference>
<dbReference type="SUPFAM" id="SSF51294">
    <property type="entry name" value="Hedgehog/intein (Hint) domain"/>
    <property type="match status" value="1"/>
</dbReference>
<dbReference type="SUPFAM" id="SSF48024">
    <property type="entry name" value="N-terminal domain of DnaB helicase"/>
    <property type="match status" value="1"/>
</dbReference>
<dbReference type="SUPFAM" id="SSF52540">
    <property type="entry name" value="P-loop containing nucleoside triphosphate hydrolases"/>
    <property type="match status" value="1"/>
</dbReference>
<dbReference type="PROSITE" id="PS50818">
    <property type="entry name" value="INTEIN_C_TER"/>
    <property type="match status" value="1"/>
</dbReference>
<dbReference type="PROSITE" id="PS51199">
    <property type="entry name" value="SF4_HELICASE"/>
    <property type="match status" value="2"/>
</dbReference>
<proteinExistence type="inferred from homology"/>
<reference key="1">
    <citation type="journal article" date="1999" name="J. Mol. Evol.">
        <title>The plastid genome of the cryptophyte alga, Guillardia theta: complete sequence and conserved synteny groups confirm its common ancestry with red algae.</title>
        <authorList>
            <person name="Douglas S.E."/>
            <person name="Penny S.L."/>
        </authorList>
    </citation>
    <scope>NUCLEOTIDE SEQUENCE [LARGE SCALE GENOMIC DNA]</scope>
</reference>
<sequence length="599" mass="69445">MKVTKFYNLKAEKHLIIQILVEKDFFLQIYTKIDTQVFYFQSHQILYRSINILHTKKVLINLPNLLSLLHSELVSETVINYLITLFNDRDNFRILNINDSLKVLLDNFIRRELQNSCAKIVSLTFNFNLSVETLLQKSNLLISNINTYNKKVSLKSISQLLLETILEIDKKTNRSTHVLTGFFDLDHILVGLQKSDLIIIAGRPSMGKTAFMLSLVRNVADIQSFPIVIFSLEMSSKQLIYRLISNETNIATSRLREGNISISEWEILNRAMTILSNLNIYLDDENNLDVLDIQSKLASLQQIYGDIGLIVIDYLQLLQYKEKSSQRHIELSYITRYLKLIAKDFNLPLVVLSQLSRNVEFRLNKRPILSDLKESGCLSYATNQPYFLKSDNVNFSKLTSLKVSNHYILSATLELLIPFQYNRIYPIVSLIKRELQTGYKVVYELDFYISVIVSTVEHYVLTLNGWKRILELTVDDLVATLDIQYLIYNNTEVDLFSSNVIFSSVINLICMNRINVYDFWIPKTNNFFVNALLVHNSIEQDADVVLFLYRDSYYQHNLKQSNIDMCEVIVAKHRHGTIGMVNLIFNPNTVSFMNLIKES</sequence>
<organism>
    <name type="scientific">Guillardia theta</name>
    <name type="common">Cryptophyte</name>
    <name type="synonym">Cryptomonas phi</name>
    <dbReference type="NCBI Taxonomy" id="55529"/>
    <lineage>
        <taxon>Eukaryota</taxon>
        <taxon>Cryptophyceae</taxon>
        <taxon>Pyrenomonadales</taxon>
        <taxon>Geminigeraceae</taxon>
        <taxon>Guillardia</taxon>
    </lineage>
</organism>
<protein>
    <recommendedName>
        <fullName>Probable replicative DNA helicase</fullName>
        <ecNumber evidence="1">5.6.2.3</ecNumber>
    </recommendedName>
    <alternativeName>
        <fullName evidence="5">DNA 5'-3' helicase DnaB</fullName>
    </alternativeName>
    <component>
        <recommendedName>
            <fullName>Gth DnaB intein</fullName>
            <ecNumber evidence="2">3.1.-.-</ecNumber>
        </recommendedName>
    </component>
</protein>
<evidence type="ECO:0000250" key="1">
    <source>
        <dbReference type="UniProtKB" id="P0ACB0"/>
    </source>
</evidence>
<evidence type="ECO:0000250" key="2">
    <source>
        <dbReference type="UniProtKB" id="Q55418"/>
    </source>
</evidence>
<evidence type="ECO:0000255" key="3"/>
<evidence type="ECO:0000255" key="4">
    <source>
        <dbReference type="PROSITE-ProRule" id="PRU00596"/>
    </source>
</evidence>
<evidence type="ECO:0000305" key="5"/>
<keyword id="KW-0067">ATP-binding</keyword>
<keyword id="KW-0068">Autocatalytic cleavage</keyword>
<keyword id="KW-0150">Chloroplast</keyword>
<keyword id="KW-0235">DNA replication</keyword>
<keyword id="KW-0238">DNA-binding</keyword>
<keyword id="KW-0347">Helicase</keyword>
<keyword id="KW-0378">Hydrolase</keyword>
<keyword id="KW-0413">Isomerase</keyword>
<keyword id="KW-0547">Nucleotide-binding</keyword>
<keyword id="KW-0934">Plastid</keyword>
<keyword id="KW-0639">Primosome</keyword>
<keyword id="KW-0651">Protein splicing</keyword>
<keyword id="KW-0677">Repeat</keyword>
<geneLocation type="chloroplast"/>
<feature type="chain" id="PRO_0000013291" description="Probable replicative DNA helicase, 1st part" evidence="3">
    <location>
        <begin position="1"/>
        <end position="376"/>
    </location>
</feature>
<feature type="chain" id="PRO_0000013292" description="Gth DnaB intein" evidence="3">
    <location>
        <begin position="377"/>
        <end position="536"/>
    </location>
</feature>
<feature type="chain" id="PRO_0000013293" description="Probable replicative DNA helicase, 2nd part" evidence="3">
    <location>
        <begin position="537"/>
        <end position="599"/>
    </location>
</feature>
<feature type="domain" description="SF4 helicase; first part" evidence="4">
    <location>
        <begin position="171"/>
        <end position="439"/>
    </location>
</feature>
<feature type="domain" description="SF4 helicase; second part" evidence="4">
    <location>
        <begin position="333"/>
        <end position="599"/>
    </location>
</feature>
<feature type="binding site" evidence="4">
    <location>
        <begin position="202"/>
        <end position="209"/>
    </location>
    <ligand>
        <name>ATP</name>
        <dbReference type="ChEBI" id="CHEBI:30616"/>
    </ligand>
</feature>